<comment type="function">
    <text evidence="2">Acts as an E3 ubiquitin-protein ligase. Plays an essential role in autophagy activation during viral infection. Mechanistically, activates TANK-binding kinase 1/TBK1 by facilitating its dimerization and ability to phosphorylate the selective autophagy receptor SQSTM1. In order to achieve this function, TRIM23 mediates 'Lys-27'-linked auto-ubiquitination of its ADP-ribosylation factor (ARF) domain to induce its GTPase activity and its recruitment to autophagosomes.</text>
</comment>
<comment type="catalytic activity">
    <reaction evidence="2">
        <text>S-ubiquitinyl-[E2 ubiquitin-conjugating enzyme]-L-cysteine + [acceptor protein]-L-lysine = [E2 ubiquitin-conjugating enzyme]-L-cysteine + N(6)-ubiquitinyl-[acceptor protein]-L-lysine.</text>
        <dbReference type="EC" id="2.3.2.27"/>
    </reaction>
</comment>
<comment type="pathway">
    <text>Protein modification; protein ubiquitination.</text>
</comment>
<comment type="subunit">
    <text evidence="2">Homodimer. Interacts with PSCD1. Interacts with UBE2D2. Interacts with TBK1 (via N-terminal kinase domain) and p62/SQSTM1.</text>
</comment>
<comment type="subcellular location">
    <subcellularLocation>
        <location evidence="2">Cytoplasm</location>
    </subcellularLocation>
    <subcellularLocation>
        <location evidence="2">Endomembrane system</location>
    </subcellularLocation>
    <subcellularLocation>
        <location evidence="2">Golgi apparatus membrane</location>
    </subcellularLocation>
    <subcellularLocation>
        <location evidence="2">Lysosome membrane</location>
    </subcellularLocation>
    <text evidence="2">Membrane-associated with the Golgi complex and lysosomal structures.</text>
</comment>
<comment type="alternative products">
    <event type="alternative splicing"/>
    <isoform>
        <id>P36407-1</id>
        <name>1</name>
        <sequence type="displayed"/>
    </isoform>
    <isoform>
        <id>P36407-2</id>
        <name>2</name>
        <sequence type="described" ref="VSP_039562"/>
    </isoform>
</comment>
<comment type="domain">
    <text evidence="2">The RING-type zinc finger domain is responsible for E3 ubiquitin ligase activity.</text>
</comment>
<comment type="similarity">
    <text evidence="6">In the C-terminal section; belongs to the small GTPase superfamily. Arf family.</text>
</comment>
<sequence length="573" mass="63892">MAALAVNKPGAGVDSGRQGSRGTAVVKVLECGVCEDVFSLQGDKVPRLLLCGHTVCHDCLTRLPLHGRAIRCPFDRQVTDLGDSGVWGLKKNFALLELLERLQNGHIGQYGAAEEALGISGESIIRCDEDEAHVASVYCTVCATHLCSECSQVTHSTKTLAKHRRVPLADKPHEKTMCCQHQVHAIEFVCLEEACQTSPLMCCVCKEYGKHQGHKHSVLEPEANQIRASILDMAHCIRTFTEEISDYSRKLVGIVQHIEGGEQIVEDGIGMAHTEHVPGTAENARSCVRAYFSDLHETLCRQEEMALSVVDAHVREKLIWLRQQQEDMTILLSQVSTACLHCKTLQQDDCRVVLAKQEITRLLETLQKQQQQFTEVADHIQLDASIPVTFTKDNRVYHGPKMEIRVVTLGLDGAGKTTILFKLKQDEFMQPIPTIGFNVETVEYKNLKFTIWDVGGKHKLRPLWKHYYLNTQAVVFVVDSSHRDRISEAHSELAKLLTEKELRDALLLIFANKQDVAGALSVEEITELLSLHKLCCGRSWYIQGCDARSGMGLYEGLDWLSRQLVAAGVLDVA</sequence>
<keyword id="KW-0025">Alternative splicing</keyword>
<keyword id="KW-0175">Coiled coil</keyword>
<keyword id="KW-0963">Cytoplasm</keyword>
<keyword id="KW-0333">Golgi apparatus</keyword>
<keyword id="KW-0342">GTP-binding</keyword>
<keyword id="KW-0458">Lysosome</keyword>
<keyword id="KW-0472">Membrane</keyword>
<keyword id="KW-0479">Metal-binding</keyword>
<keyword id="KW-0547">Nucleotide-binding</keyword>
<keyword id="KW-1185">Reference proteome</keyword>
<keyword id="KW-0808">Transferase</keyword>
<keyword id="KW-0833">Ubl conjugation pathway</keyword>
<keyword id="KW-0862">Zinc</keyword>
<keyword id="KW-0863">Zinc-finger</keyword>
<gene>
    <name type="primary">Trim23</name>
    <name type="synonym">Ard-1</name>
    <name type="synonym">Ard1</name>
    <name type="synonym">Arfd1</name>
</gene>
<feature type="chain" id="PRO_0000207485" description="E3 ubiquitin-protein ligase TRIM23">
    <location>
        <begin position="1"/>
        <end position="573"/>
    </location>
</feature>
<feature type="zinc finger region" description="RING-type; degenerate" evidence="5">
    <location>
        <begin position="31"/>
        <end position="76"/>
    </location>
</feature>
<feature type="zinc finger region" description="B box-type; degenerate" evidence="4">
    <location>
        <begin position="122"/>
        <end position="168"/>
    </location>
</feature>
<feature type="region of interest" description="ARF-like">
    <location>
        <begin position="390"/>
        <end position="573"/>
    </location>
</feature>
<feature type="coiled-coil region" evidence="3">
    <location>
        <begin position="351"/>
        <end position="378"/>
    </location>
</feature>
<feature type="binding site" evidence="1">
    <location>
        <begin position="411"/>
        <end position="418"/>
    </location>
    <ligand>
        <name>GTP</name>
        <dbReference type="ChEBI" id="CHEBI:37565"/>
    </ligand>
</feature>
<feature type="binding site" evidence="1">
    <location>
        <begin position="454"/>
        <end position="458"/>
    </location>
    <ligand>
        <name>GTP</name>
        <dbReference type="ChEBI" id="CHEBI:37565"/>
    </ligand>
</feature>
<feature type="binding site" evidence="1">
    <location>
        <begin position="513"/>
        <end position="516"/>
    </location>
    <ligand>
        <name>GTP</name>
        <dbReference type="ChEBI" id="CHEBI:37565"/>
    </ligand>
</feature>
<feature type="splice variant" id="VSP_039562" description="In isoform 2." evidence="6">
    <location>
        <begin position="216"/>
        <end position="276"/>
    </location>
</feature>
<feature type="sequence conflict" description="In Ref. 1; AAA41301." evidence="6" ref="1">
    <original>T</original>
    <variation>S</variation>
    <location>
        <position position="61"/>
    </location>
</feature>
<feature type="sequence conflict" description="In Ref. 1; AAA41301." evidence="6" ref="1">
    <original>C</original>
    <variation>CE</variation>
    <location>
        <position position="342"/>
    </location>
</feature>
<feature type="sequence conflict" description="In Ref. 1; AAA41301." evidence="6" ref="1">
    <original>H</original>
    <variation>Y</variation>
    <location>
        <position position="398"/>
    </location>
</feature>
<feature type="sequence conflict" description="In Ref. 1; AAA41301." evidence="6" ref="1">
    <original>G</original>
    <variation>E</variation>
    <location>
        <position position="456"/>
    </location>
</feature>
<dbReference type="EC" id="2.3.2.27"/>
<dbReference type="EMBL" id="L04760">
    <property type="protein sequence ID" value="AAA41301.1"/>
    <property type="molecule type" value="mRNA"/>
</dbReference>
<dbReference type="RefSeq" id="NP_001094107.1">
    <property type="nucleotide sequence ID" value="NM_001100637.1"/>
</dbReference>
<dbReference type="SMR" id="P36407"/>
<dbReference type="BioGRID" id="249495">
    <property type="interactions" value="2"/>
</dbReference>
<dbReference type="FunCoup" id="P36407">
    <property type="interactions" value="1223"/>
</dbReference>
<dbReference type="STRING" id="10116.ENSRNOP00000016597"/>
<dbReference type="PhosphoSitePlus" id="P36407"/>
<dbReference type="jPOST" id="P36407"/>
<dbReference type="PaxDb" id="10116-ENSRNOP00000016647"/>
<dbReference type="GeneID" id="81002"/>
<dbReference type="KEGG" id="rno:81002"/>
<dbReference type="UCSC" id="RGD:621587">
    <molecule id="P36407-1"/>
    <property type="organism name" value="rat"/>
</dbReference>
<dbReference type="AGR" id="RGD:621587"/>
<dbReference type="CTD" id="373"/>
<dbReference type="RGD" id="621587">
    <property type="gene designation" value="Trim23"/>
</dbReference>
<dbReference type="eggNOG" id="KOG0070">
    <property type="taxonomic scope" value="Eukaryota"/>
</dbReference>
<dbReference type="eggNOG" id="KOG4185">
    <property type="taxonomic scope" value="Eukaryota"/>
</dbReference>
<dbReference type="InParanoid" id="P36407"/>
<dbReference type="OrthoDB" id="2011769at2759"/>
<dbReference type="PhylomeDB" id="P36407"/>
<dbReference type="UniPathway" id="UPA00143"/>
<dbReference type="PRO" id="PR:P36407"/>
<dbReference type="Proteomes" id="UP000002494">
    <property type="component" value="Unplaced"/>
</dbReference>
<dbReference type="GO" id="GO:0005737">
    <property type="term" value="C:cytoplasm"/>
    <property type="evidence" value="ECO:0000266"/>
    <property type="project" value="RGD"/>
</dbReference>
<dbReference type="GO" id="GO:0000139">
    <property type="term" value="C:Golgi membrane"/>
    <property type="evidence" value="ECO:0000250"/>
    <property type="project" value="HGNC-UCL"/>
</dbReference>
<dbReference type="GO" id="GO:0005765">
    <property type="term" value="C:lysosomal membrane"/>
    <property type="evidence" value="ECO:0000250"/>
    <property type="project" value="HGNC-UCL"/>
</dbReference>
<dbReference type="GO" id="GO:0005634">
    <property type="term" value="C:nucleus"/>
    <property type="evidence" value="ECO:0000266"/>
    <property type="project" value="RGD"/>
</dbReference>
<dbReference type="GO" id="GO:0005886">
    <property type="term" value="C:plasma membrane"/>
    <property type="evidence" value="ECO:0000318"/>
    <property type="project" value="GO_Central"/>
</dbReference>
<dbReference type="GO" id="GO:0019003">
    <property type="term" value="F:GDP binding"/>
    <property type="evidence" value="ECO:0000250"/>
    <property type="project" value="HGNC-UCL"/>
</dbReference>
<dbReference type="GO" id="GO:0005525">
    <property type="term" value="F:GTP binding"/>
    <property type="evidence" value="ECO:0000314"/>
    <property type="project" value="RGD"/>
</dbReference>
<dbReference type="GO" id="GO:0003924">
    <property type="term" value="F:GTPase activity"/>
    <property type="evidence" value="ECO:0000250"/>
    <property type="project" value="HGNC-UCL"/>
</dbReference>
<dbReference type="GO" id="GO:0042802">
    <property type="term" value="F:identical protein binding"/>
    <property type="evidence" value="ECO:0000266"/>
    <property type="project" value="RGD"/>
</dbReference>
<dbReference type="GO" id="GO:0061630">
    <property type="term" value="F:ubiquitin protein ligase activity"/>
    <property type="evidence" value="ECO:0000266"/>
    <property type="project" value="RGD"/>
</dbReference>
<dbReference type="GO" id="GO:0004842">
    <property type="term" value="F:ubiquitin-protein transferase activity"/>
    <property type="evidence" value="ECO:0000250"/>
    <property type="project" value="HGNC-UCL"/>
</dbReference>
<dbReference type="GO" id="GO:0008270">
    <property type="term" value="F:zinc ion binding"/>
    <property type="evidence" value="ECO:0007669"/>
    <property type="project" value="UniProtKB-KW"/>
</dbReference>
<dbReference type="GO" id="GO:0006886">
    <property type="term" value="P:intracellular protein transport"/>
    <property type="evidence" value="ECO:0000318"/>
    <property type="project" value="GO_Central"/>
</dbReference>
<dbReference type="GO" id="GO:0010508">
    <property type="term" value="P:positive regulation of autophagy"/>
    <property type="evidence" value="ECO:0000266"/>
    <property type="project" value="RGD"/>
</dbReference>
<dbReference type="GO" id="GO:0016567">
    <property type="term" value="P:protein ubiquitination"/>
    <property type="evidence" value="ECO:0000250"/>
    <property type="project" value="HGNC-UCL"/>
</dbReference>
<dbReference type="GO" id="GO:0016192">
    <property type="term" value="P:vesicle-mediated transport"/>
    <property type="evidence" value="ECO:0000318"/>
    <property type="project" value="GO_Central"/>
</dbReference>
<dbReference type="CDD" id="cd04158">
    <property type="entry name" value="ARD1"/>
    <property type="match status" value="1"/>
</dbReference>
<dbReference type="CDD" id="cd19773">
    <property type="entry name" value="Bbox2_TRIM23_C-IX_rpt1"/>
    <property type="match status" value="1"/>
</dbReference>
<dbReference type="CDD" id="cd19774">
    <property type="entry name" value="Bbox2_TRIM23_C-IX_rpt2"/>
    <property type="match status" value="1"/>
</dbReference>
<dbReference type="CDD" id="cd16645">
    <property type="entry name" value="mRING-HC-C3HC3D_TRIM23_C-IX"/>
    <property type="match status" value="1"/>
</dbReference>
<dbReference type="FunFam" id="3.30.160.60:FF:000440">
    <property type="entry name" value="E3 ubiquitin-protein ligase TRIM23"/>
    <property type="match status" value="1"/>
</dbReference>
<dbReference type="FunFam" id="3.30.40.10:FF:000130">
    <property type="entry name" value="E3 ubiquitin-protein ligase TRIM23"/>
    <property type="match status" value="1"/>
</dbReference>
<dbReference type="FunFam" id="3.40.50.300:FF:000486">
    <property type="entry name" value="E3 ubiquitin-protein ligase TRIM23"/>
    <property type="match status" value="1"/>
</dbReference>
<dbReference type="Gene3D" id="3.30.160.60">
    <property type="entry name" value="Classic Zinc Finger"/>
    <property type="match status" value="1"/>
</dbReference>
<dbReference type="Gene3D" id="3.40.50.300">
    <property type="entry name" value="P-loop containing nucleotide triphosphate hydrolases"/>
    <property type="match status" value="1"/>
</dbReference>
<dbReference type="Gene3D" id="3.30.40.10">
    <property type="entry name" value="Zinc/RING finger domain, C3HC4 (zinc finger)"/>
    <property type="match status" value="1"/>
</dbReference>
<dbReference type="InterPro" id="IPR003649">
    <property type="entry name" value="Bbox_C"/>
</dbReference>
<dbReference type="InterPro" id="IPR027417">
    <property type="entry name" value="P-loop_NTPase"/>
</dbReference>
<dbReference type="InterPro" id="IPR005225">
    <property type="entry name" value="Small_GTP-bd"/>
</dbReference>
<dbReference type="InterPro" id="IPR024156">
    <property type="entry name" value="Small_GTPase_ARF"/>
</dbReference>
<dbReference type="InterPro" id="IPR006689">
    <property type="entry name" value="Small_GTPase_ARF/SAR"/>
</dbReference>
<dbReference type="InterPro" id="IPR027370">
    <property type="entry name" value="Znf-RING_euk"/>
</dbReference>
<dbReference type="InterPro" id="IPR000315">
    <property type="entry name" value="Znf_B-box"/>
</dbReference>
<dbReference type="InterPro" id="IPR013087">
    <property type="entry name" value="Znf_C2H2_type"/>
</dbReference>
<dbReference type="InterPro" id="IPR001841">
    <property type="entry name" value="Znf_RING"/>
</dbReference>
<dbReference type="InterPro" id="IPR013083">
    <property type="entry name" value="Znf_RING/FYVE/PHD"/>
</dbReference>
<dbReference type="InterPro" id="IPR017907">
    <property type="entry name" value="Znf_RING_CS"/>
</dbReference>
<dbReference type="NCBIfam" id="TIGR00231">
    <property type="entry name" value="small_GTP"/>
    <property type="match status" value="1"/>
</dbReference>
<dbReference type="PANTHER" id="PTHR11711">
    <property type="entry name" value="ADP RIBOSYLATION FACTOR-RELATED"/>
    <property type="match status" value="1"/>
</dbReference>
<dbReference type="Pfam" id="PF00025">
    <property type="entry name" value="Arf"/>
    <property type="match status" value="1"/>
</dbReference>
<dbReference type="Pfam" id="PF00643">
    <property type="entry name" value="zf-B_box"/>
    <property type="match status" value="1"/>
</dbReference>
<dbReference type="Pfam" id="PF13445">
    <property type="entry name" value="zf-RING_UBOX"/>
    <property type="match status" value="1"/>
</dbReference>
<dbReference type="PRINTS" id="PR00328">
    <property type="entry name" value="SAR1GTPBP"/>
</dbReference>
<dbReference type="SMART" id="SM00177">
    <property type="entry name" value="ARF"/>
    <property type="match status" value="1"/>
</dbReference>
<dbReference type="SMART" id="SM00502">
    <property type="entry name" value="BBC"/>
    <property type="match status" value="1"/>
</dbReference>
<dbReference type="SMART" id="SM00336">
    <property type="entry name" value="BBOX"/>
    <property type="match status" value="2"/>
</dbReference>
<dbReference type="SMART" id="SM00175">
    <property type="entry name" value="RAB"/>
    <property type="match status" value="1"/>
</dbReference>
<dbReference type="SMART" id="SM00184">
    <property type="entry name" value="RING"/>
    <property type="match status" value="1"/>
</dbReference>
<dbReference type="SMART" id="SM00178">
    <property type="entry name" value="SAR"/>
    <property type="match status" value="1"/>
</dbReference>
<dbReference type="SUPFAM" id="SSF57845">
    <property type="entry name" value="B-box zinc-binding domain"/>
    <property type="match status" value="1"/>
</dbReference>
<dbReference type="SUPFAM" id="SSF52540">
    <property type="entry name" value="P-loop containing nucleoside triphosphate hydrolases"/>
    <property type="match status" value="1"/>
</dbReference>
<dbReference type="SUPFAM" id="SSF57850">
    <property type="entry name" value="RING/U-box"/>
    <property type="match status" value="1"/>
</dbReference>
<dbReference type="PROSITE" id="PS51417">
    <property type="entry name" value="ARF"/>
    <property type="match status" value="1"/>
</dbReference>
<dbReference type="PROSITE" id="PS50119">
    <property type="entry name" value="ZF_BBOX"/>
    <property type="match status" value="1"/>
</dbReference>
<dbReference type="PROSITE" id="PS00518">
    <property type="entry name" value="ZF_RING_1"/>
    <property type="match status" value="1"/>
</dbReference>
<dbReference type="PROSITE" id="PS50089">
    <property type="entry name" value="ZF_RING_2"/>
    <property type="match status" value="1"/>
</dbReference>
<protein>
    <recommendedName>
        <fullName>E3 ubiquitin-protein ligase TRIM23</fullName>
        <ecNumber>2.3.2.27</ecNumber>
    </recommendedName>
    <alternativeName>
        <fullName>ADP-ribosylation factor domain-containing protein 1</fullName>
    </alternativeName>
    <alternativeName>
        <fullName>GTP-binding protein ARD-1</fullName>
    </alternativeName>
    <alternativeName>
        <fullName evidence="6">RING-type E3 ubiquitin transferase TRIM23</fullName>
    </alternativeName>
    <alternativeName>
        <fullName>Tripartite motif-containing protein 23</fullName>
    </alternativeName>
</protein>
<organism>
    <name type="scientific">Rattus norvegicus</name>
    <name type="common">Rat</name>
    <dbReference type="NCBI Taxonomy" id="10116"/>
    <lineage>
        <taxon>Eukaryota</taxon>
        <taxon>Metazoa</taxon>
        <taxon>Chordata</taxon>
        <taxon>Craniata</taxon>
        <taxon>Vertebrata</taxon>
        <taxon>Euteleostomi</taxon>
        <taxon>Mammalia</taxon>
        <taxon>Eutheria</taxon>
        <taxon>Euarchontoglires</taxon>
        <taxon>Glires</taxon>
        <taxon>Rodentia</taxon>
        <taxon>Myomorpha</taxon>
        <taxon>Muroidea</taxon>
        <taxon>Muridae</taxon>
        <taxon>Murinae</taxon>
        <taxon>Rattus</taxon>
    </lineage>
</organism>
<name>TRI23_RAT</name>
<evidence type="ECO:0000250" key="1"/>
<evidence type="ECO:0000250" key="2">
    <source>
        <dbReference type="UniProtKB" id="P36406"/>
    </source>
</evidence>
<evidence type="ECO:0000255" key="3"/>
<evidence type="ECO:0000255" key="4">
    <source>
        <dbReference type="PROSITE-ProRule" id="PRU00024"/>
    </source>
</evidence>
<evidence type="ECO:0000255" key="5">
    <source>
        <dbReference type="PROSITE-ProRule" id="PRU00175"/>
    </source>
</evidence>
<evidence type="ECO:0000305" key="6"/>
<reference key="1">
    <citation type="journal article" date="2004" name="Nature">
        <title>Genome sequence of the Brown Norway rat yields insights into mammalian evolution.</title>
        <authorList>
            <person name="Gibbs R.A."/>
            <person name="Weinstock G.M."/>
            <person name="Metzker M.L."/>
            <person name="Muzny D.M."/>
            <person name="Sodergren E.J."/>
            <person name="Scherer S."/>
            <person name="Scott G."/>
            <person name="Steffen D."/>
            <person name="Worley K.C."/>
            <person name="Burch P.E."/>
            <person name="Okwuonu G."/>
            <person name="Hines S."/>
            <person name="Lewis L."/>
            <person name="Deramo C."/>
            <person name="Delgado O."/>
            <person name="Dugan-Rocha S."/>
            <person name="Miner G."/>
            <person name="Morgan M."/>
            <person name="Hawes A."/>
            <person name="Gill R."/>
            <person name="Holt R.A."/>
            <person name="Adams M.D."/>
            <person name="Amanatides P.G."/>
            <person name="Baden-Tillson H."/>
            <person name="Barnstead M."/>
            <person name="Chin S."/>
            <person name="Evans C.A."/>
            <person name="Ferriera S."/>
            <person name="Fosler C."/>
            <person name="Glodek A."/>
            <person name="Gu Z."/>
            <person name="Jennings D."/>
            <person name="Kraft C.L."/>
            <person name="Nguyen T."/>
            <person name="Pfannkoch C.M."/>
            <person name="Sitter C."/>
            <person name="Sutton G.G."/>
            <person name="Venter J.C."/>
            <person name="Woodage T."/>
            <person name="Smith D."/>
            <person name="Lee H.-M."/>
            <person name="Gustafson E."/>
            <person name="Cahill P."/>
            <person name="Kana A."/>
            <person name="Doucette-Stamm L."/>
            <person name="Weinstock K."/>
            <person name="Fechtel K."/>
            <person name="Weiss R.B."/>
            <person name="Dunn D.M."/>
            <person name="Green E.D."/>
            <person name="Blakesley R.W."/>
            <person name="Bouffard G.G."/>
            <person name="De Jong P.J."/>
            <person name="Osoegawa K."/>
            <person name="Zhu B."/>
            <person name="Marra M."/>
            <person name="Schein J."/>
            <person name="Bosdet I."/>
            <person name="Fjell C."/>
            <person name="Jones S."/>
            <person name="Krzywinski M."/>
            <person name="Mathewson C."/>
            <person name="Siddiqui A."/>
            <person name="Wye N."/>
            <person name="McPherson J."/>
            <person name="Zhao S."/>
            <person name="Fraser C.M."/>
            <person name="Shetty J."/>
            <person name="Shatsman S."/>
            <person name="Geer K."/>
            <person name="Chen Y."/>
            <person name="Abramzon S."/>
            <person name="Nierman W.C."/>
            <person name="Havlak P.H."/>
            <person name="Chen R."/>
            <person name="Durbin K.J."/>
            <person name="Egan A."/>
            <person name="Ren Y."/>
            <person name="Song X.-Z."/>
            <person name="Li B."/>
            <person name="Liu Y."/>
            <person name="Qin X."/>
            <person name="Cawley S."/>
            <person name="Cooney A.J."/>
            <person name="D'Souza L.M."/>
            <person name="Martin K."/>
            <person name="Wu J.Q."/>
            <person name="Gonzalez-Garay M.L."/>
            <person name="Jackson A.R."/>
            <person name="Kalafus K.J."/>
            <person name="McLeod M.P."/>
            <person name="Milosavljevic A."/>
            <person name="Virk D."/>
            <person name="Volkov A."/>
            <person name="Wheeler D.A."/>
            <person name="Zhang Z."/>
            <person name="Bailey J.A."/>
            <person name="Eichler E.E."/>
            <person name="Tuzun E."/>
            <person name="Birney E."/>
            <person name="Mongin E."/>
            <person name="Ureta-Vidal A."/>
            <person name="Woodwark C."/>
            <person name="Zdobnov E."/>
            <person name="Bork P."/>
            <person name="Suyama M."/>
            <person name="Torrents D."/>
            <person name="Alexandersson M."/>
            <person name="Trask B.J."/>
            <person name="Young J.M."/>
            <person name="Huang H."/>
            <person name="Wang H."/>
            <person name="Xing H."/>
            <person name="Daniels S."/>
            <person name="Gietzen D."/>
            <person name="Schmidt J."/>
            <person name="Stevens K."/>
            <person name="Vitt U."/>
            <person name="Wingrove J."/>
            <person name="Camara F."/>
            <person name="Mar Alba M."/>
            <person name="Abril J.F."/>
            <person name="Guigo R."/>
            <person name="Smit A."/>
            <person name="Dubchak I."/>
            <person name="Rubin E.M."/>
            <person name="Couronne O."/>
            <person name="Poliakov A."/>
            <person name="Huebner N."/>
            <person name="Ganten D."/>
            <person name="Goesele C."/>
            <person name="Hummel O."/>
            <person name="Kreitler T."/>
            <person name="Lee Y.-A."/>
            <person name="Monti J."/>
            <person name="Schulz H."/>
            <person name="Zimdahl H."/>
            <person name="Himmelbauer H."/>
            <person name="Lehrach H."/>
            <person name="Jacob H.J."/>
            <person name="Bromberg S."/>
            <person name="Gullings-Handley J."/>
            <person name="Jensen-Seaman M.I."/>
            <person name="Kwitek A.E."/>
            <person name="Lazar J."/>
            <person name="Pasko D."/>
            <person name="Tonellato P.J."/>
            <person name="Twigger S."/>
            <person name="Ponting C.P."/>
            <person name="Duarte J.M."/>
            <person name="Rice S."/>
            <person name="Goodstadt L."/>
            <person name="Beatson S.A."/>
            <person name="Emes R.D."/>
            <person name="Winter E.E."/>
            <person name="Webber C."/>
            <person name="Brandt P."/>
            <person name="Nyakatura G."/>
            <person name="Adetobi M."/>
            <person name="Chiaromonte F."/>
            <person name="Elnitski L."/>
            <person name="Eswara P."/>
            <person name="Hardison R.C."/>
            <person name="Hou M."/>
            <person name="Kolbe D."/>
            <person name="Makova K."/>
            <person name="Miller W."/>
            <person name="Nekrutenko A."/>
            <person name="Riemer C."/>
            <person name="Schwartz S."/>
            <person name="Taylor J."/>
            <person name="Yang S."/>
            <person name="Zhang Y."/>
            <person name="Lindpaintner K."/>
            <person name="Andrews T.D."/>
            <person name="Caccamo M."/>
            <person name="Clamp M."/>
            <person name="Clarke L."/>
            <person name="Curwen V."/>
            <person name="Durbin R.M."/>
            <person name="Eyras E."/>
            <person name="Searle S.M."/>
            <person name="Cooper G.M."/>
            <person name="Batzoglou S."/>
            <person name="Brudno M."/>
            <person name="Sidow A."/>
            <person name="Stone E.A."/>
            <person name="Payseur B.A."/>
            <person name="Bourque G."/>
            <person name="Lopez-Otin C."/>
            <person name="Puente X.S."/>
            <person name="Chakrabarti K."/>
            <person name="Chatterji S."/>
            <person name="Dewey C."/>
            <person name="Pachter L."/>
            <person name="Bray N."/>
            <person name="Yap V.B."/>
            <person name="Caspi A."/>
            <person name="Tesler G."/>
            <person name="Pevzner P.A."/>
            <person name="Haussler D."/>
            <person name="Roskin K.M."/>
            <person name="Baertsch R."/>
            <person name="Clawson H."/>
            <person name="Furey T.S."/>
            <person name="Hinrichs A.S."/>
            <person name="Karolchik D."/>
            <person name="Kent W.J."/>
            <person name="Rosenbloom K.R."/>
            <person name="Trumbower H."/>
            <person name="Weirauch M."/>
            <person name="Cooper D.N."/>
            <person name="Stenson P.D."/>
            <person name="Ma B."/>
            <person name="Brent M."/>
            <person name="Arumugam M."/>
            <person name="Shteynberg D."/>
            <person name="Copley R.R."/>
            <person name="Taylor M.S."/>
            <person name="Riethman H."/>
            <person name="Mudunuri U."/>
            <person name="Peterson J."/>
            <person name="Guyer M."/>
            <person name="Felsenfeld A."/>
            <person name="Old S."/>
            <person name="Mockrin S."/>
            <person name="Collins F.S."/>
        </authorList>
    </citation>
    <scope>NUCLEOTIDE SEQUENCE [LARGE SCALE GENOMIC DNA]</scope>
    <source>
        <strain>Brown Norway</strain>
    </source>
</reference>
<reference key="2">
    <citation type="journal article" date="1993" name="J. Biol. Chem.">
        <title>ARD 1, a 64-kDa guanine nucleotide-binding protein with a carboxyl-terminal ADP-ribosylation factor domain.</title>
        <authorList>
            <person name="Mishima K."/>
            <person name="Tsuchiya M."/>
            <person name="Nightingale M.S."/>
            <person name="Moss J."/>
            <person name="Vaughan M."/>
        </authorList>
    </citation>
    <scope>NUCLEOTIDE SEQUENCE [MRNA] OF 21-573 (ISOFORM 1)</scope>
</reference>
<accession>P36407</accession>
<accession>D3ZT39</accession>
<proteinExistence type="evidence at transcript level"/>